<dbReference type="PIR" id="A00078">
    <property type="entry name" value="CCQF2F"/>
</dbReference>
<dbReference type="SMR" id="P00086"/>
<dbReference type="GO" id="GO:0009055">
    <property type="term" value="F:electron transfer activity"/>
    <property type="evidence" value="ECO:0007669"/>
    <property type="project" value="InterPro"/>
</dbReference>
<dbReference type="GO" id="GO:0020037">
    <property type="term" value="F:heme binding"/>
    <property type="evidence" value="ECO:0007669"/>
    <property type="project" value="InterPro"/>
</dbReference>
<dbReference type="GO" id="GO:0046872">
    <property type="term" value="F:metal ion binding"/>
    <property type="evidence" value="ECO:0007669"/>
    <property type="project" value="UniProtKB-KW"/>
</dbReference>
<dbReference type="GO" id="GO:0015979">
    <property type="term" value="P:photosynthesis"/>
    <property type="evidence" value="ECO:0007669"/>
    <property type="project" value="UniProtKB-KW"/>
</dbReference>
<dbReference type="Gene3D" id="1.10.760.10">
    <property type="entry name" value="Cytochrome c-like domain"/>
    <property type="match status" value="1"/>
</dbReference>
<dbReference type="InterPro" id="IPR009056">
    <property type="entry name" value="Cyt_c-like_dom"/>
</dbReference>
<dbReference type="InterPro" id="IPR036909">
    <property type="entry name" value="Cyt_c-like_dom_sf"/>
</dbReference>
<dbReference type="InterPro" id="IPR002327">
    <property type="entry name" value="Cyt_c_1A/1B"/>
</dbReference>
<dbReference type="PANTHER" id="PTHR11961">
    <property type="entry name" value="CYTOCHROME C"/>
    <property type="match status" value="1"/>
</dbReference>
<dbReference type="Pfam" id="PF00034">
    <property type="entry name" value="Cytochrom_C"/>
    <property type="match status" value="1"/>
</dbReference>
<dbReference type="PRINTS" id="PR00604">
    <property type="entry name" value="CYTCHRMECIAB"/>
</dbReference>
<dbReference type="SUPFAM" id="SSF46626">
    <property type="entry name" value="Cytochrome c"/>
    <property type="match status" value="1"/>
</dbReference>
<dbReference type="PROSITE" id="PS51007">
    <property type="entry name" value="CYTC"/>
    <property type="match status" value="1"/>
</dbReference>
<keyword id="KW-0903">Direct protein sequencing</keyword>
<keyword id="KW-0249">Electron transport</keyword>
<keyword id="KW-0349">Heme</keyword>
<keyword id="KW-0408">Iron</keyword>
<keyword id="KW-0479">Metal-binding</keyword>
<keyword id="KW-0602">Photosynthesis</keyword>
<keyword id="KW-0813">Transport</keyword>
<organism>
    <name type="scientific">Magnetospirillum fulvum</name>
    <name type="common">Rhodospirillum fulvum</name>
    <dbReference type="NCBI Taxonomy" id="1082"/>
    <lineage>
        <taxon>Bacteria</taxon>
        <taxon>Pseudomonadati</taxon>
        <taxon>Pseudomonadota</taxon>
        <taxon>Alphaproteobacteria</taxon>
        <taxon>Rhodospirillales</taxon>
        <taxon>Rhodospirillaceae</taxon>
        <taxon>Magnetospirillum</taxon>
    </lineage>
</organism>
<comment type="function">
    <text>Cytochrome c2 is found mainly in purple, non-sulfur, photosynthetic bacteria where it functions as the electron donor to the oxidized bacteriochlorophyll in the photophosphorylation pathway. However, it may also have a role in the respiratory chain and is found in some non-photosynthetic bacteria.</text>
</comment>
<comment type="PTM">
    <text evidence="1">Binds 1 heme c group covalently per subunit.</text>
</comment>
<comment type="similarity">
    <text evidence="3">Belongs to the cytochrome c family.</text>
</comment>
<protein>
    <recommendedName>
        <fullName>Cytochrome c2 iso-1</fullName>
    </recommendedName>
</protein>
<accession>P00086</accession>
<evidence type="ECO:0000250" key="1"/>
<evidence type="ECO:0000255" key="2">
    <source>
        <dbReference type="PROSITE-ProRule" id="PRU00433"/>
    </source>
</evidence>
<evidence type="ECO:0000305" key="3"/>
<name>CYC21_MAGFU</name>
<sequence>ADAPTAFNQCKACHSIEAGKNGVGPSLSGAYGRKVGLAPNYKYSAAHLASGMTIDEAMLTNYLANPKATIPGNKMGASFGGLKKPEDVKAVIEYLKTVK</sequence>
<feature type="chain" id="PRO_0000108349" description="Cytochrome c2 iso-1">
    <location>
        <begin position="1"/>
        <end position="99"/>
    </location>
</feature>
<feature type="binding site" description="covalent" evidence="2">
    <location>
        <position position="10"/>
    </location>
    <ligand>
        <name>heme c</name>
        <dbReference type="ChEBI" id="CHEBI:61717"/>
    </ligand>
</feature>
<feature type="binding site" description="covalent" evidence="2">
    <location>
        <position position="13"/>
    </location>
    <ligand>
        <name>heme c</name>
        <dbReference type="ChEBI" id="CHEBI:61717"/>
    </ligand>
</feature>
<feature type="binding site" description="axial binding residue" evidence="2">
    <location>
        <position position="14"/>
    </location>
    <ligand>
        <name>heme c</name>
        <dbReference type="ChEBI" id="CHEBI:61717"/>
    </ligand>
    <ligandPart>
        <name>Fe</name>
        <dbReference type="ChEBI" id="CHEBI:18248"/>
    </ligandPart>
</feature>
<feature type="binding site" description="axial binding residue" evidence="2">
    <location>
        <position position="75"/>
    </location>
    <ligand>
        <name>heme c</name>
        <dbReference type="ChEBI" id="CHEBI:61717"/>
    </ligand>
    <ligandPart>
        <name>Fe</name>
        <dbReference type="ChEBI" id="CHEBI:18248"/>
    </ligandPart>
</feature>
<reference key="1">
    <citation type="journal article" date="1979" name="Nature">
        <title>Cytochrome c2 sequence variation among the recognised species of purple nonsulphur photosynthetic bacteria.</title>
        <authorList>
            <person name="Ambler R.P."/>
            <person name="Daniel M."/>
            <person name="Hermoso J."/>
            <person name="Meyer T.E."/>
            <person name="Bartsch R.G."/>
            <person name="Kamen M.D."/>
        </authorList>
    </citation>
    <scope>PROTEIN SEQUENCE</scope>
    <source>
        <strain>ATCC 35113 / DSM 113 / KCTC 15608 / NCIMB 11884 / 1360</strain>
    </source>
</reference>
<reference key="2">
    <citation type="submission" date="1977-06" db="PIR data bank">
        <authorList>
            <person name="Ambler R.P."/>
        </authorList>
    </citation>
    <scope>PROTEIN SEQUENCE</scope>
</reference>
<proteinExistence type="evidence at protein level"/>